<comment type="function">
    <text>Transports C5-C7 oxodicarboxylates across the inner membranes of mitochondria. Can transport 2-oxoadipate, 2-oxoglutarate, adipate, glutarate, 2-oxopimelate, oxaloacetate, citrate and malate. The main physiological role is probably to supply 2-oxoadipate and 2-oxoglutarate from the mitochondrial matrix to the cytosol where they are used in the biosynthesis of lysine and glutamate, respectively, and in lysine catabolism.</text>
</comment>
<comment type="subcellular location">
    <subcellularLocation>
        <location>Mitochondrion inner membrane</location>
        <topology>Multi-pass membrane protein</topology>
    </subcellularLocation>
</comment>
<comment type="miscellaneous">
    <text evidence="2">Present with 2840 molecules/cell in log phase SD medium.</text>
</comment>
<comment type="similarity">
    <text evidence="3">Belongs to the mitochondrial carrier (TC 2.A.29) family.</text>
</comment>
<dbReference type="EMBL" id="U43703">
    <property type="protein sequence ID" value="AAB68225.1"/>
    <property type="molecule type" value="Genomic_DNA"/>
</dbReference>
<dbReference type="EMBL" id="BK006949">
    <property type="protein sequence ID" value="DAA11299.1"/>
    <property type="molecule type" value="Genomic_DNA"/>
</dbReference>
<dbReference type="PIR" id="S69050">
    <property type="entry name" value="S69050"/>
</dbReference>
<dbReference type="RefSeq" id="NP_015191.1">
    <property type="nucleotide sequence ID" value="NM_001183948.1"/>
</dbReference>
<dbReference type="SMR" id="Q03028"/>
<dbReference type="BioGRID" id="36047">
    <property type="interactions" value="83"/>
</dbReference>
<dbReference type="DIP" id="DIP-8776N"/>
<dbReference type="FunCoup" id="Q03028">
    <property type="interactions" value="289"/>
</dbReference>
<dbReference type="IntAct" id="Q03028">
    <property type="interactions" value="2"/>
</dbReference>
<dbReference type="STRING" id="4932.YPL134C"/>
<dbReference type="TCDB" id="2.A.29.2.8">
    <property type="family name" value="the mitochondrial carrier (mc) family"/>
</dbReference>
<dbReference type="GlyGen" id="Q03028">
    <property type="glycosylation" value="1 site"/>
</dbReference>
<dbReference type="PaxDb" id="4932-YPL134C"/>
<dbReference type="PeptideAtlas" id="Q03028"/>
<dbReference type="EnsemblFungi" id="YPL134C_mRNA">
    <property type="protein sequence ID" value="YPL134C"/>
    <property type="gene ID" value="YPL134C"/>
</dbReference>
<dbReference type="GeneID" id="855969"/>
<dbReference type="KEGG" id="sce:YPL134C"/>
<dbReference type="AGR" id="SGD:S000006055"/>
<dbReference type="SGD" id="S000006055">
    <property type="gene designation" value="ODC1"/>
</dbReference>
<dbReference type="VEuPathDB" id="FungiDB:YPL134C"/>
<dbReference type="eggNOG" id="KOG0754">
    <property type="taxonomic scope" value="Eukaryota"/>
</dbReference>
<dbReference type="GeneTree" id="ENSGT00730000111119"/>
<dbReference type="HOGENOM" id="CLU_015166_5_2_1"/>
<dbReference type="InParanoid" id="Q03028"/>
<dbReference type="OMA" id="LPFQYQF"/>
<dbReference type="OrthoDB" id="434783at2759"/>
<dbReference type="BioCyc" id="YEAST:G3O-34033-MONOMER"/>
<dbReference type="BioGRID-ORCS" id="855969">
    <property type="hits" value="2 hits in 10 CRISPR screens"/>
</dbReference>
<dbReference type="PRO" id="PR:Q03028"/>
<dbReference type="Proteomes" id="UP000002311">
    <property type="component" value="Chromosome XVI"/>
</dbReference>
<dbReference type="RNAct" id="Q03028">
    <property type="molecule type" value="protein"/>
</dbReference>
<dbReference type="GO" id="GO:0005743">
    <property type="term" value="C:mitochondrial inner membrane"/>
    <property type="evidence" value="ECO:0000314"/>
    <property type="project" value="SGD"/>
</dbReference>
<dbReference type="GO" id="GO:0005739">
    <property type="term" value="C:mitochondrion"/>
    <property type="evidence" value="ECO:0000314"/>
    <property type="project" value="SGD"/>
</dbReference>
<dbReference type="GO" id="GO:0005471">
    <property type="term" value="F:ATP:ADP antiporter activity"/>
    <property type="evidence" value="ECO:0007669"/>
    <property type="project" value="InterPro"/>
</dbReference>
<dbReference type="GO" id="GO:0005310">
    <property type="term" value="F:dicarboxylic acid transmembrane transporter activity"/>
    <property type="evidence" value="ECO:0000314"/>
    <property type="project" value="SGD"/>
</dbReference>
<dbReference type="GO" id="GO:0015183">
    <property type="term" value="F:L-aspartate transmembrane transporter activity"/>
    <property type="evidence" value="ECO:0000318"/>
    <property type="project" value="GO_Central"/>
</dbReference>
<dbReference type="GO" id="GO:0005313">
    <property type="term" value="F:L-glutamate transmembrane transporter activity"/>
    <property type="evidence" value="ECO:0000318"/>
    <property type="project" value="GO_Central"/>
</dbReference>
<dbReference type="GO" id="GO:0015810">
    <property type="term" value="P:aspartate transmembrane transport"/>
    <property type="evidence" value="ECO:0000318"/>
    <property type="project" value="GO_Central"/>
</dbReference>
<dbReference type="GO" id="GO:0015813">
    <property type="term" value="P:L-glutamate transmembrane transport"/>
    <property type="evidence" value="ECO:0000318"/>
    <property type="project" value="GO_Central"/>
</dbReference>
<dbReference type="GO" id="GO:0043490">
    <property type="term" value="P:malate-aspartate shuttle"/>
    <property type="evidence" value="ECO:0000318"/>
    <property type="project" value="GO_Central"/>
</dbReference>
<dbReference type="GO" id="GO:0140021">
    <property type="term" value="P:mitochondrial ADP transmembrane transport"/>
    <property type="evidence" value="ECO:0007669"/>
    <property type="project" value="InterPro"/>
</dbReference>
<dbReference type="GO" id="GO:1990544">
    <property type="term" value="P:mitochondrial ATP transmembrane transport"/>
    <property type="evidence" value="ECO:0007669"/>
    <property type="project" value="InterPro"/>
</dbReference>
<dbReference type="GO" id="GO:0006839">
    <property type="term" value="P:mitochondrial transport"/>
    <property type="evidence" value="ECO:0000314"/>
    <property type="project" value="SGD"/>
</dbReference>
<dbReference type="FunFam" id="1.50.40.10:FF:000034">
    <property type="entry name" value="Mitochondrial 2-oxodicarboxylate carrier"/>
    <property type="match status" value="1"/>
</dbReference>
<dbReference type="Gene3D" id="1.50.40.10">
    <property type="entry name" value="Mitochondrial carrier domain"/>
    <property type="match status" value="1"/>
</dbReference>
<dbReference type="InterPro" id="IPR002113">
    <property type="entry name" value="ADT_euk_type"/>
</dbReference>
<dbReference type="InterPro" id="IPR002067">
    <property type="entry name" value="Mit_carrier"/>
</dbReference>
<dbReference type="InterPro" id="IPR051752">
    <property type="entry name" value="Mito_2-oxodicarb_carrier"/>
</dbReference>
<dbReference type="InterPro" id="IPR018108">
    <property type="entry name" value="Mitochondrial_sb/sol_carrier"/>
</dbReference>
<dbReference type="InterPro" id="IPR023395">
    <property type="entry name" value="Mt_carrier_dom_sf"/>
</dbReference>
<dbReference type="PANTHER" id="PTHR46356">
    <property type="entry name" value="MITOCHONDRIAL 2-OXODICARBOXYLATE CARRIER"/>
    <property type="match status" value="1"/>
</dbReference>
<dbReference type="PANTHER" id="PTHR46356:SF1">
    <property type="entry name" value="MITOCHONDRIAL 2-OXODICARBOXYLATE CARRIER"/>
    <property type="match status" value="1"/>
</dbReference>
<dbReference type="Pfam" id="PF00153">
    <property type="entry name" value="Mito_carr"/>
    <property type="match status" value="3"/>
</dbReference>
<dbReference type="PRINTS" id="PR00927">
    <property type="entry name" value="ADPTRNSLCASE"/>
</dbReference>
<dbReference type="PRINTS" id="PR00926">
    <property type="entry name" value="MITOCARRIER"/>
</dbReference>
<dbReference type="SUPFAM" id="SSF103506">
    <property type="entry name" value="Mitochondrial carrier"/>
    <property type="match status" value="1"/>
</dbReference>
<dbReference type="PROSITE" id="PS50920">
    <property type="entry name" value="SOLCAR"/>
    <property type="match status" value="3"/>
</dbReference>
<accession>Q03028</accession>
<accession>D6W3N3</accession>
<gene>
    <name type="primary">ODC1</name>
    <name type="ordered locus">YPL134C</name>
    <name type="ORF">LPI11C</name>
</gene>
<feature type="chain" id="PRO_0000090648" description="Mitochondrial 2-oxodicarboxylate carrier 1">
    <location>
        <begin position="1"/>
        <end position="310"/>
    </location>
</feature>
<feature type="transmembrane region" description="Helical; Name=1" evidence="1">
    <location>
        <begin position="9"/>
        <end position="29"/>
    </location>
</feature>
<feature type="transmembrane region" description="Helical; Name=2" evidence="1">
    <location>
        <begin position="78"/>
        <end position="97"/>
    </location>
</feature>
<feature type="transmembrane region" description="Helical; Name=3" evidence="1">
    <location>
        <begin position="126"/>
        <end position="146"/>
    </location>
</feature>
<feature type="transmembrane region" description="Helical; Name=4" evidence="1">
    <location>
        <begin position="179"/>
        <end position="199"/>
    </location>
</feature>
<feature type="transmembrane region" description="Helical; Name=5" evidence="1">
    <location>
        <begin position="219"/>
        <end position="239"/>
    </location>
</feature>
<feature type="transmembrane region" description="Helical; Name=6" evidence="1">
    <location>
        <begin position="281"/>
        <end position="301"/>
    </location>
</feature>
<feature type="repeat" description="Solcar 1">
    <location>
        <begin position="9"/>
        <end position="108"/>
    </location>
</feature>
<feature type="repeat" description="Solcar 2">
    <location>
        <begin position="120"/>
        <end position="204"/>
    </location>
</feature>
<feature type="repeat" description="Solcar 3">
    <location>
        <begin position="213"/>
        <end position="300"/>
    </location>
</feature>
<reference key="1">
    <citation type="journal article" date="1997" name="Nature">
        <title>The nucleotide sequence of Saccharomyces cerevisiae chromosome XVI.</title>
        <authorList>
            <person name="Bussey H."/>
            <person name="Storms R.K."/>
            <person name="Ahmed A."/>
            <person name="Albermann K."/>
            <person name="Allen E."/>
            <person name="Ansorge W."/>
            <person name="Araujo R."/>
            <person name="Aparicio A."/>
            <person name="Barrell B.G."/>
            <person name="Badcock K."/>
            <person name="Benes V."/>
            <person name="Botstein D."/>
            <person name="Bowman S."/>
            <person name="Brueckner M."/>
            <person name="Carpenter J."/>
            <person name="Cherry J.M."/>
            <person name="Chung E."/>
            <person name="Churcher C.M."/>
            <person name="Coster F."/>
            <person name="Davis K."/>
            <person name="Davis R.W."/>
            <person name="Dietrich F.S."/>
            <person name="Delius H."/>
            <person name="DiPaolo T."/>
            <person name="Dubois E."/>
            <person name="Duesterhoeft A."/>
            <person name="Duncan M."/>
            <person name="Floeth M."/>
            <person name="Fortin N."/>
            <person name="Friesen J.D."/>
            <person name="Fritz C."/>
            <person name="Goffeau A."/>
            <person name="Hall J."/>
            <person name="Hebling U."/>
            <person name="Heumann K."/>
            <person name="Hilbert H."/>
            <person name="Hillier L.W."/>
            <person name="Hunicke-Smith S."/>
            <person name="Hyman R.W."/>
            <person name="Johnston M."/>
            <person name="Kalman S."/>
            <person name="Kleine K."/>
            <person name="Komp C."/>
            <person name="Kurdi O."/>
            <person name="Lashkari D."/>
            <person name="Lew H."/>
            <person name="Lin A."/>
            <person name="Lin D."/>
            <person name="Louis E.J."/>
            <person name="Marathe R."/>
            <person name="Messenguy F."/>
            <person name="Mewes H.-W."/>
            <person name="Mirtipati S."/>
            <person name="Moestl D."/>
            <person name="Mueller-Auer S."/>
            <person name="Namath A."/>
            <person name="Nentwich U."/>
            <person name="Oefner P."/>
            <person name="Pearson D."/>
            <person name="Petel F.X."/>
            <person name="Pohl T.M."/>
            <person name="Purnelle B."/>
            <person name="Rajandream M.A."/>
            <person name="Rechmann S."/>
            <person name="Rieger M."/>
            <person name="Riles L."/>
            <person name="Roberts D."/>
            <person name="Schaefer M."/>
            <person name="Scharfe M."/>
            <person name="Scherens B."/>
            <person name="Schramm S."/>
            <person name="Schroeder M."/>
            <person name="Sdicu A.-M."/>
            <person name="Tettelin H."/>
            <person name="Urrestarazu L.A."/>
            <person name="Ushinsky S."/>
            <person name="Vierendeels F."/>
            <person name="Vissers S."/>
            <person name="Voss H."/>
            <person name="Walsh S.V."/>
            <person name="Wambutt R."/>
            <person name="Wang Y."/>
            <person name="Wedler E."/>
            <person name="Wedler H."/>
            <person name="Winnett E."/>
            <person name="Zhong W.-W."/>
            <person name="Zollner A."/>
            <person name="Vo D.H."/>
            <person name="Hani J."/>
        </authorList>
    </citation>
    <scope>NUCLEOTIDE SEQUENCE [LARGE SCALE GENOMIC DNA]</scope>
    <source>
        <strain>ATCC 204508 / S288c</strain>
    </source>
</reference>
<reference key="2">
    <citation type="journal article" date="2014" name="G3 (Bethesda)">
        <title>The reference genome sequence of Saccharomyces cerevisiae: Then and now.</title>
        <authorList>
            <person name="Engel S.R."/>
            <person name="Dietrich F.S."/>
            <person name="Fisk D.G."/>
            <person name="Binkley G."/>
            <person name="Balakrishnan R."/>
            <person name="Costanzo M.C."/>
            <person name="Dwight S.S."/>
            <person name="Hitz B.C."/>
            <person name="Karra K."/>
            <person name="Nash R.S."/>
            <person name="Weng S."/>
            <person name="Wong E.D."/>
            <person name="Lloyd P."/>
            <person name="Skrzypek M.S."/>
            <person name="Miyasato S.R."/>
            <person name="Simison M."/>
            <person name="Cherry J.M."/>
        </authorList>
    </citation>
    <scope>GENOME REANNOTATION</scope>
    <source>
        <strain>ATCC 204508 / S288c</strain>
    </source>
</reference>
<reference key="3">
    <citation type="journal article" date="2001" name="J. Biol. Chem.">
        <title>Identification in Saccharomyces cerevisiae of two isoforms of a novel mitochondrial transporter for 2-oxoadipate and 2-oxoglutarate.</title>
        <authorList>
            <person name="Palmieri L."/>
            <person name="Agrimi G."/>
            <person name="Runswick M.J."/>
            <person name="Fearnley I.M."/>
            <person name="Palmieri F."/>
            <person name="Walker J.E."/>
        </authorList>
    </citation>
    <scope>CHARACTERIZATION</scope>
</reference>
<reference key="4">
    <citation type="journal article" date="2003" name="Nature">
        <title>Global analysis of protein expression in yeast.</title>
        <authorList>
            <person name="Ghaemmaghami S."/>
            <person name="Huh W.-K."/>
            <person name="Bower K."/>
            <person name="Howson R.W."/>
            <person name="Belle A."/>
            <person name="Dephoure N."/>
            <person name="O'Shea E.K."/>
            <person name="Weissman J.S."/>
        </authorList>
    </citation>
    <scope>LEVEL OF PROTEIN EXPRESSION [LARGE SCALE ANALYSIS]</scope>
</reference>
<proteinExistence type="evidence at protein level"/>
<sequence>MTSIDNRPLPFIYQFTAGAIAGVSELLVMYPLDVVKTRMQLQVTTKGHPAVVAAKAAVDHYTGVMDCLTKIVKKEGFSHLYKGITSPILMEAPKRAIKFSGNDTFQTFYKKIFPTPNGEMTQKIAIYSGASAGAVEAFVVAPFELVKIRLQDVNSQFKTPIEVVKNSVVKGGVLSLFNGLEATIWRHVLWNAGYFGIIFQIRKLLPAAKTSTEKTRNDLIAGAIGGTVGCLLNTPFDVVKSRIQRSSGPLRKYNWSLPSVLLVYREEGFKALYKGFAPKVMRLAPGGGLLLVVFTNVMDFFREVKYGKKQ</sequence>
<organism>
    <name type="scientific">Saccharomyces cerevisiae (strain ATCC 204508 / S288c)</name>
    <name type="common">Baker's yeast</name>
    <dbReference type="NCBI Taxonomy" id="559292"/>
    <lineage>
        <taxon>Eukaryota</taxon>
        <taxon>Fungi</taxon>
        <taxon>Dikarya</taxon>
        <taxon>Ascomycota</taxon>
        <taxon>Saccharomycotina</taxon>
        <taxon>Saccharomycetes</taxon>
        <taxon>Saccharomycetales</taxon>
        <taxon>Saccharomycetaceae</taxon>
        <taxon>Saccharomyces</taxon>
    </lineage>
</organism>
<evidence type="ECO:0000255" key="1"/>
<evidence type="ECO:0000269" key="2">
    <source>
    </source>
</evidence>
<evidence type="ECO:0000305" key="3"/>
<keyword id="KW-0472">Membrane</keyword>
<keyword id="KW-0496">Mitochondrion</keyword>
<keyword id="KW-0999">Mitochondrion inner membrane</keyword>
<keyword id="KW-1185">Reference proteome</keyword>
<keyword id="KW-0677">Repeat</keyword>
<keyword id="KW-0812">Transmembrane</keyword>
<keyword id="KW-1133">Transmembrane helix</keyword>
<keyword id="KW-0813">Transport</keyword>
<name>ODC1_YEAST</name>
<protein>
    <recommendedName>
        <fullName>Mitochondrial 2-oxodicarboxylate carrier 1</fullName>
    </recommendedName>
</protein>